<protein>
    <recommendedName>
        <fullName evidence="1">Threonine--tRNA ligase</fullName>
        <ecNumber evidence="1">6.1.1.3</ecNumber>
    </recommendedName>
    <alternativeName>
        <fullName evidence="1">Threonyl-tRNA synthetase</fullName>
        <shortName evidence="1">ThrRS</shortName>
    </alternativeName>
</protein>
<gene>
    <name evidence="1" type="primary">thrS</name>
    <name type="ordered locus">ECDH10B_1855</name>
</gene>
<accession>B1XGI1</accession>
<feature type="chain" id="PRO_1000098569" description="Threonine--tRNA ligase">
    <location>
        <begin position="1"/>
        <end position="642"/>
    </location>
</feature>
<feature type="domain" description="TGS" evidence="2">
    <location>
        <begin position="1"/>
        <end position="61"/>
    </location>
</feature>
<feature type="region of interest" description="Catalytic" evidence="1">
    <location>
        <begin position="243"/>
        <end position="534"/>
    </location>
</feature>
<feature type="binding site" evidence="1">
    <location>
        <position position="334"/>
    </location>
    <ligand>
        <name>Zn(2+)</name>
        <dbReference type="ChEBI" id="CHEBI:29105"/>
    </ligand>
</feature>
<feature type="binding site" evidence="1">
    <location>
        <position position="385"/>
    </location>
    <ligand>
        <name>Zn(2+)</name>
        <dbReference type="ChEBI" id="CHEBI:29105"/>
    </ligand>
</feature>
<feature type="binding site" evidence="1">
    <location>
        <position position="511"/>
    </location>
    <ligand>
        <name>Zn(2+)</name>
        <dbReference type="ChEBI" id="CHEBI:29105"/>
    </ligand>
</feature>
<feature type="modified residue" description="N6-acetyllysine" evidence="1">
    <location>
        <position position="286"/>
    </location>
</feature>
<reference key="1">
    <citation type="journal article" date="2008" name="J. Bacteriol.">
        <title>The complete genome sequence of Escherichia coli DH10B: insights into the biology of a laboratory workhorse.</title>
        <authorList>
            <person name="Durfee T."/>
            <person name="Nelson R."/>
            <person name="Baldwin S."/>
            <person name="Plunkett G. III"/>
            <person name="Burland V."/>
            <person name="Mau B."/>
            <person name="Petrosino J.F."/>
            <person name="Qin X."/>
            <person name="Muzny D.M."/>
            <person name="Ayele M."/>
            <person name="Gibbs R.A."/>
            <person name="Csorgo B."/>
            <person name="Posfai G."/>
            <person name="Weinstock G.M."/>
            <person name="Blattner F.R."/>
        </authorList>
    </citation>
    <scope>NUCLEOTIDE SEQUENCE [LARGE SCALE GENOMIC DNA]</scope>
    <source>
        <strain>K12 / DH10B</strain>
    </source>
</reference>
<evidence type="ECO:0000255" key="1">
    <source>
        <dbReference type="HAMAP-Rule" id="MF_00184"/>
    </source>
</evidence>
<evidence type="ECO:0000255" key="2">
    <source>
        <dbReference type="PROSITE-ProRule" id="PRU01228"/>
    </source>
</evidence>
<name>SYT_ECODH</name>
<dbReference type="EC" id="6.1.1.3" evidence="1"/>
<dbReference type="EMBL" id="CP000948">
    <property type="protein sequence ID" value="ACB02919.1"/>
    <property type="molecule type" value="Genomic_DNA"/>
</dbReference>
<dbReference type="RefSeq" id="WP_001144202.1">
    <property type="nucleotide sequence ID" value="NC_010473.1"/>
</dbReference>
<dbReference type="SMR" id="B1XGI1"/>
<dbReference type="GeneID" id="93775932"/>
<dbReference type="KEGG" id="ecd:ECDH10B_1855"/>
<dbReference type="HOGENOM" id="CLU_008554_0_1_6"/>
<dbReference type="GO" id="GO:0005829">
    <property type="term" value="C:cytosol"/>
    <property type="evidence" value="ECO:0007669"/>
    <property type="project" value="TreeGrafter"/>
</dbReference>
<dbReference type="GO" id="GO:0005524">
    <property type="term" value="F:ATP binding"/>
    <property type="evidence" value="ECO:0007669"/>
    <property type="project" value="UniProtKB-UniRule"/>
</dbReference>
<dbReference type="GO" id="GO:0046872">
    <property type="term" value="F:metal ion binding"/>
    <property type="evidence" value="ECO:0007669"/>
    <property type="project" value="UniProtKB-KW"/>
</dbReference>
<dbReference type="GO" id="GO:0004829">
    <property type="term" value="F:threonine-tRNA ligase activity"/>
    <property type="evidence" value="ECO:0007669"/>
    <property type="project" value="UniProtKB-UniRule"/>
</dbReference>
<dbReference type="GO" id="GO:0000049">
    <property type="term" value="F:tRNA binding"/>
    <property type="evidence" value="ECO:0007669"/>
    <property type="project" value="UniProtKB-KW"/>
</dbReference>
<dbReference type="GO" id="GO:0006435">
    <property type="term" value="P:threonyl-tRNA aminoacylation"/>
    <property type="evidence" value="ECO:0007669"/>
    <property type="project" value="UniProtKB-UniRule"/>
</dbReference>
<dbReference type="CDD" id="cd01667">
    <property type="entry name" value="TGS_ThrRS"/>
    <property type="match status" value="1"/>
</dbReference>
<dbReference type="CDD" id="cd00860">
    <property type="entry name" value="ThrRS_anticodon"/>
    <property type="match status" value="1"/>
</dbReference>
<dbReference type="CDD" id="cd00771">
    <property type="entry name" value="ThrRS_core"/>
    <property type="match status" value="1"/>
</dbReference>
<dbReference type="FunFam" id="3.10.20.30:FF:000005">
    <property type="entry name" value="Threonine--tRNA ligase"/>
    <property type="match status" value="1"/>
</dbReference>
<dbReference type="FunFam" id="3.30.54.20:FF:000002">
    <property type="entry name" value="Threonine--tRNA ligase"/>
    <property type="match status" value="1"/>
</dbReference>
<dbReference type="FunFam" id="3.30.930.10:FF:000002">
    <property type="entry name" value="Threonine--tRNA ligase"/>
    <property type="match status" value="1"/>
</dbReference>
<dbReference type="FunFam" id="3.40.50.800:FF:000001">
    <property type="entry name" value="Threonine--tRNA ligase"/>
    <property type="match status" value="1"/>
</dbReference>
<dbReference type="FunFam" id="3.30.980.10:FF:000005">
    <property type="entry name" value="Threonyl-tRNA synthetase, mitochondrial"/>
    <property type="match status" value="1"/>
</dbReference>
<dbReference type="Gene3D" id="3.10.20.30">
    <property type="match status" value="1"/>
</dbReference>
<dbReference type="Gene3D" id="3.30.54.20">
    <property type="match status" value="1"/>
</dbReference>
<dbReference type="Gene3D" id="3.40.50.800">
    <property type="entry name" value="Anticodon-binding domain"/>
    <property type="match status" value="1"/>
</dbReference>
<dbReference type="Gene3D" id="3.30.930.10">
    <property type="entry name" value="Bira Bifunctional Protein, Domain 2"/>
    <property type="match status" value="1"/>
</dbReference>
<dbReference type="Gene3D" id="3.30.980.10">
    <property type="entry name" value="Threonyl-trna Synthetase, Chain A, domain 2"/>
    <property type="match status" value="1"/>
</dbReference>
<dbReference type="HAMAP" id="MF_00184">
    <property type="entry name" value="Thr_tRNA_synth"/>
    <property type="match status" value="1"/>
</dbReference>
<dbReference type="InterPro" id="IPR002314">
    <property type="entry name" value="aa-tRNA-synt_IIb"/>
</dbReference>
<dbReference type="InterPro" id="IPR006195">
    <property type="entry name" value="aa-tRNA-synth_II"/>
</dbReference>
<dbReference type="InterPro" id="IPR045864">
    <property type="entry name" value="aa-tRNA-synth_II/BPL/LPL"/>
</dbReference>
<dbReference type="InterPro" id="IPR004154">
    <property type="entry name" value="Anticodon-bd"/>
</dbReference>
<dbReference type="InterPro" id="IPR036621">
    <property type="entry name" value="Anticodon-bd_dom_sf"/>
</dbReference>
<dbReference type="InterPro" id="IPR012675">
    <property type="entry name" value="Beta-grasp_dom_sf"/>
</dbReference>
<dbReference type="InterPro" id="IPR004095">
    <property type="entry name" value="TGS"/>
</dbReference>
<dbReference type="InterPro" id="IPR012676">
    <property type="entry name" value="TGS-like"/>
</dbReference>
<dbReference type="InterPro" id="IPR002320">
    <property type="entry name" value="Thr-tRNA-ligase_IIa"/>
</dbReference>
<dbReference type="InterPro" id="IPR018163">
    <property type="entry name" value="Thr/Ala-tRNA-synth_IIc_edit"/>
</dbReference>
<dbReference type="InterPro" id="IPR047246">
    <property type="entry name" value="ThrRS_anticodon"/>
</dbReference>
<dbReference type="InterPro" id="IPR033728">
    <property type="entry name" value="ThrRS_core"/>
</dbReference>
<dbReference type="InterPro" id="IPR012947">
    <property type="entry name" value="tRNA_SAD"/>
</dbReference>
<dbReference type="NCBIfam" id="TIGR00418">
    <property type="entry name" value="thrS"/>
    <property type="match status" value="1"/>
</dbReference>
<dbReference type="PANTHER" id="PTHR11451:SF44">
    <property type="entry name" value="THREONINE--TRNA LIGASE, CHLOROPLASTIC_MITOCHONDRIAL 2"/>
    <property type="match status" value="1"/>
</dbReference>
<dbReference type="PANTHER" id="PTHR11451">
    <property type="entry name" value="THREONINE-TRNA LIGASE"/>
    <property type="match status" value="1"/>
</dbReference>
<dbReference type="Pfam" id="PF03129">
    <property type="entry name" value="HGTP_anticodon"/>
    <property type="match status" value="1"/>
</dbReference>
<dbReference type="Pfam" id="PF02824">
    <property type="entry name" value="TGS"/>
    <property type="match status" value="1"/>
</dbReference>
<dbReference type="Pfam" id="PF00587">
    <property type="entry name" value="tRNA-synt_2b"/>
    <property type="match status" value="1"/>
</dbReference>
<dbReference type="Pfam" id="PF07973">
    <property type="entry name" value="tRNA_SAD"/>
    <property type="match status" value="1"/>
</dbReference>
<dbReference type="PRINTS" id="PR01047">
    <property type="entry name" value="TRNASYNTHTHR"/>
</dbReference>
<dbReference type="SMART" id="SM00863">
    <property type="entry name" value="tRNA_SAD"/>
    <property type="match status" value="1"/>
</dbReference>
<dbReference type="SUPFAM" id="SSF52954">
    <property type="entry name" value="Class II aaRS ABD-related"/>
    <property type="match status" value="1"/>
</dbReference>
<dbReference type="SUPFAM" id="SSF55681">
    <property type="entry name" value="Class II aaRS and biotin synthetases"/>
    <property type="match status" value="1"/>
</dbReference>
<dbReference type="SUPFAM" id="SSF81271">
    <property type="entry name" value="TGS-like"/>
    <property type="match status" value="1"/>
</dbReference>
<dbReference type="SUPFAM" id="SSF55186">
    <property type="entry name" value="ThrRS/AlaRS common domain"/>
    <property type="match status" value="1"/>
</dbReference>
<dbReference type="PROSITE" id="PS50862">
    <property type="entry name" value="AA_TRNA_LIGASE_II"/>
    <property type="match status" value="1"/>
</dbReference>
<dbReference type="PROSITE" id="PS51880">
    <property type="entry name" value="TGS"/>
    <property type="match status" value="1"/>
</dbReference>
<organism>
    <name type="scientific">Escherichia coli (strain K12 / DH10B)</name>
    <dbReference type="NCBI Taxonomy" id="316385"/>
    <lineage>
        <taxon>Bacteria</taxon>
        <taxon>Pseudomonadati</taxon>
        <taxon>Pseudomonadota</taxon>
        <taxon>Gammaproteobacteria</taxon>
        <taxon>Enterobacterales</taxon>
        <taxon>Enterobacteriaceae</taxon>
        <taxon>Escherichia</taxon>
    </lineage>
</organism>
<proteinExistence type="inferred from homology"/>
<sequence>MPVITLPDGSQRHYDHAVSPMDVALDIGPGLAKACIAGRVNGELVDACDLIENDAQLSIITAKDEEGLEIIRHSCAHLLGHAIKQLWPHTKMAIGPVIDNGFYYDVDLDRTLTQEDVEALEKRMHELAEKNYDVIKKKVSWHEARETFANRGESYKVSILDENIAHDDKPGLYFHEEYVDMCRGPHVPNMRFCHHFKLMKTAGAYWRGDSNNKMLQRIYGTAWADKKALNAYLQRLEEAAKRDHRKIGKQLDLYHMQEEAPGMVFWHNDGWTIFRELEVFVRSKLKEYQYQEVKGPFMMDRVLWEKTGHWDNYKDAMFTTSSENREYCIKPMNCPGHVQIFNQGLKSYRDLPLRMAEFGSCHRNEPSGSLHGLMRVRGFTQDDAHIFCTEEQIRDEVNGCIRLVYDMYSTFGFEKIVVKLSTRPEKRIGSDEMWDRAEADLAVALEENNIPFEYQLGEGAFYGPKIEFTLYDCLDRAWQCGTVQLDFSLPSRLSASYVGEDNERKVPVMIHRAILGSMERFIGILTEEFAGFFPTWLAPVQVVIMNITDSQSEYVNELTQKLSNAGIRVKADLRNEKIGFKIREHTLRRVPYMLVCGDKEVESGKVAVRTRRGKDLGSMDVNEVIEKLQQEIRSRSLKQLEE</sequence>
<comment type="function">
    <text evidence="1">Catalyzes the attachment of threonine to tRNA(Thr) in a two-step reaction: L-threonine is first activated by ATP to form Thr-AMP and then transferred to the acceptor end of tRNA(Thr). Also edits incorrectly charged L-seryl-tRNA(Thr).</text>
</comment>
<comment type="catalytic activity">
    <reaction evidence="1">
        <text>tRNA(Thr) + L-threonine + ATP = L-threonyl-tRNA(Thr) + AMP + diphosphate + H(+)</text>
        <dbReference type="Rhea" id="RHEA:24624"/>
        <dbReference type="Rhea" id="RHEA-COMP:9670"/>
        <dbReference type="Rhea" id="RHEA-COMP:9704"/>
        <dbReference type="ChEBI" id="CHEBI:15378"/>
        <dbReference type="ChEBI" id="CHEBI:30616"/>
        <dbReference type="ChEBI" id="CHEBI:33019"/>
        <dbReference type="ChEBI" id="CHEBI:57926"/>
        <dbReference type="ChEBI" id="CHEBI:78442"/>
        <dbReference type="ChEBI" id="CHEBI:78534"/>
        <dbReference type="ChEBI" id="CHEBI:456215"/>
        <dbReference type="EC" id="6.1.1.3"/>
    </reaction>
</comment>
<comment type="cofactor">
    <cofactor evidence="1">
        <name>Zn(2+)</name>
        <dbReference type="ChEBI" id="CHEBI:29105"/>
    </cofactor>
    <text evidence="1">Binds 1 zinc ion per subunit.</text>
</comment>
<comment type="subunit">
    <text evidence="1">Homodimer.</text>
</comment>
<comment type="subcellular location">
    <subcellularLocation>
        <location evidence="1">Cytoplasm</location>
    </subcellularLocation>
</comment>
<comment type="similarity">
    <text evidence="1">Belongs to the class-II aminoacyl-tRNA synthetase family.</text>
</comment>
<keyword id="KW-0007">Acetylation</keyword>
<keyword id="KW-0030">Aminoacyl-tRNA synthetase</keyword>
<keyword id="KW-0067">ATP-binding</keyword>
<keyword id="KW-0963">Cytoplasm</keyword>
<keyword id="KW-0436">Ligase</keyword>
<keyword id="KW-0479">Metal-binding</keyword>
<keyword id="KW-0547">Nucleotide-binding</keyword>
<keyword id="KW-0648">Protein biosynthesis</keyword>
<keyword id="KW-0694">RNA-binding</keyword>
<keyword id="KW-0820">tRNA-binding</keyword>
<keyword id="KW-0862">Zinc</keyword>